<name>NORW_SALTY</name>
<proteinExistence type="inferred from homology"/>
<keyword id="KW-0963">Cytoplasm</keyword>
<keyword id="KW-0274">FAD</keyword>
<keyword id="KW-0285">Flavoprotein</keyword>
<keyword id="KW-0520">NAD</keyword>
<keyword id="KW-0560">Oxidoreductase</keyword>
<keyword id="KW-1185">Reference proteome</keyword>
<organism>
    <name type="scientific">Salmonella typhimurium (strain LT2 / SGSC1412 / ATCC 700720)</name>
    <dbReference type="NCBI Taxonomy" id="99287"/>
    <lineage>
        <taxon>Bacteria</taxon>
        <taxon>Pseudomonadati</taxon>
        <taxon>Pseudomonadota</taxon>
        <taxon>Gammaproteobacteria</taxon>
        <taxon>Enterobacterales</taxon>
        <taxon>Enterobacteriaceae</taxon>
        <taxon>Salmonella</taxon>
    </lineage>
</organism>
<gene>
    <name evidence="1" type="primary">norW</name>
    <name evidence="1" type="synonym">flrR</name>
    <name type="ordered locus">STM2841</name>
</gene>
<comment type="function">
    <text evidence="1">One of at least two accessory proteins for anaerobic nitric oxide (NO) reductase. Reduces the rubredoxin moiety of NO reductase.</text>
</comment>
<comment type="catalytic activity">
    <reaction evidence="1">
        <text>2 reduced [nitric oxide reductase rubredoxin domain] + NAD(+) + H(+) = 2 oxidized [nitric oxide reductase rubredoxin domain] + NADH</text>
        <dbReference type="Rhea" id="RHEA:42960"/>
        <dbReference type="Rhea" id="RHEA-COMP:10304"/>
        <dbReference type="Rhea" id="RHEA-COMP:10305"/>
        <dbReference type="ChEBI" id="CHEBI:15378"/>
        <dbReference type="ChEBI" id="CHEBI:29033"/>
        <dbReference type="ChEBI" id="CHEBI:29034"/>
        <dbReference type="ChEBI" id="CHEBI:57540"/>
        <dbReference type="ChEBI" id="CHEBI:57945"/>
    </reaction>
</comment>
<comment type="cofactor">
    <cofactor evidence="1">
        <name>FAD</name>
        <dbReference type="ChEBI" id="CHEBI:57692"/>
    </cofactor>
</comment>
<comment type="pathway">
    <text evidence="1">Nitrogen metabolism; nitric oxide reduction.</text>
</comment>
<comment type="subcellular location">
    <subcellularLocation>
        <location evidence="1">Cytoplasm</location>
    </subcellularLocation>
</comment>
<comment type="similarity">
    <text evidence="1">Belongs to the FAD-dependent oxidoreductase family.</text>
</comment>
<evidence type="ECO:0000255" key="1">
    <source>
        <dbReference type="HAMAP-Rule" id="MF_01313"/>
    </source>
</evidence>
<dbReference type="EC" id="1.18.1.-" evidence="1"/>
<dbReference type="EMBL" id="AE006468">
    <property type="protein sequence ID" value="AAL21721.1"/>
    <property type="molecule type" value="Genomic_DNA"/>
</dbReference>
<dbReference type="RefSeq" id="WP_000086354.1">
    <property type="nucleotide sequence ID" value="NC_003197.2"/>
</dbReference>
<dbReference type="SMR" id="Q8ZMJ6"/>
<dbReference type="STRING" id="99287.STM2841"/>
<dbReference type="PaxDb" id="99287-STM2841"/>
<dbReference type="KEGG" id="stm:STM2841"/>
<dbReference type="PATRIC" id="fig|99287.12.peg.2995"/>
<dbReference type="HOGENOM" id="CLU_003291_4_4_6"/>
<dbReference type="OMA" id="IHHFWTF"/>
<dbReference type="PhylomeDB" id="Q8ZMJ6"/>
<dbReference type="BioCyc" id="SENT99287:STM2841-MONOMER"/>
<dbReference type="UniPathway" id="UPA00638"/>
<dbReference type="Proteomes" id="UP000001014">
    <property type="component" value="Chromosome"/>
</dbReference>
<dbReference type="GO" id="GO:0005737">
    <property type="term" value="C:cytoplasm"/>
    <property type="evidence" value="ECO:0007669"/>
    <property type="project" value="UniProtKB-SubCell"/>
</dbReference>
<dbReference type="GO" id="GO:0016731">
    <property type="term" value="F:oxidoreductase activity, acting on iron-sulfur proteins as donors, NAD or NADP as acceptor"/>
    <property type="evidence" value="ECO:0007669"/>
    <property type="project" value="UniProtKB-UniRule"/>
</dbReference>
<dbReference type="Gene3D" id="3.30.390.120">
    <property type="match status" value="1"/>
</dbReference>
<dbReference type="Gene3D" id="3.50.50.60">
    <property type="entry name" value="FAD/NAD(P)-binding domain"/>
    <property type="match status" value="2"/>
</dbReference>
<dbReference type="HAMAP" id="MF_01313">
    <property type="entry name" value="NorW"/>
    <property type="match status" value="1"/>
</dbReference>
<dbReference type="InterPro" id="IPR050260">
    <property type="entry name" value="FAD-bd_OxRdtase"/>
</dbReference>
<dbReference type="InterPro" id="IPR036188">
    <property type="entry name" value="FAD/NAD-bd_sf"/>
</dbReference>
<dbReference type="InterPro" id="IPR023753">
    <property type="entry name" value="FAD/NAD-binding_dom"/>
</dbReference>
<dbReference type="InterPro" id="IPR023961">
    <property type="entry name" value="NO_rdtase_NorW"/>
</dbReference>
<dbReference type="InterPro" id="IPR041364">
    <property type="entry name" value="Rbx-bd"/>
</dbReference>
<dbReference type="NCBIfam" id="NF003437">
    <property type="entry name" value="PRK04965.1"/>
    <property type="match status" value="1"/>
</dbReference>
<dbReference type="PANTHER" id="PTHR43429:SF3">
    <property type="entry name" value="NITRITE REDUCTASE [NAD(P)H]"/>
    <property type="match status" value="1"/>
</dbReference>
<dbReference type="PANTHER" id="PTHR43429">
    <property type="entry name" value="PYRIDINE NUCLEOTIDE-DISULFIDE OXIDOREDUCTASE DOMAIN-CONTAINING"/>
    <property type="match status" value="1"/>
</dbReference>
<dbReference type="Pfam" id="PF07992">
    <property type="entry name" value="Pyr_redox_2"/>
    <property type="match status" value="1"/>
</dbReference>
<dbReference type="Pfam" id="PF18113">
    <property type="entry name" value="Rbx_binding"/>
    <property type="match status" value="1"/>
</dbReference>
<dbReference type="PRINTS" id="PR00368">
    <property type="entry name" value="FADPNR"/>
</dbReference>
<dbReference type="PRINTS" id="PR00411">
    <property type="entry name" value="PNDRDTASEI"/>
</dbReference>
<dbReference type="SUPFAM" id="SSF51905">
    <property type="entry name" value="FAD/NAD(P)-binding domain"/>
    <property type="match status" value="1"/>
</dbReference>
<feature type="chain" id="PRO_0000167667" description="Nitric oxide reductase FlRd-NAD(+) reductase">
    <location>
        <begin position="1"/>
        <end position="377"/>
    </location>
</feature>
<accession>Q8ZMJ6</accession>
<reference key="1">
    <citation type="journal article" date="2001" name="Nature">
        <title>Complete genome sequence of Salmonella enterica serovar Typhimurium LT2.</title>
        <authorList>
            <person name="McClelland M."/>
            <person name="Sanderson K.E."/>
            <person name="Spieth J."/>
            <person name="Clifton S.W."/>
            <person name="Latreille P."/>
            <person name="Courtney L."/>
            <person name="Porwollik S."/>
            <person name="Ali J."/>
            <person name="Dante M."/>
            <person name="Du F."/>
            <person name="Hou S."/>
            <person name="Layman D."/>
            <person name="Leonard S."/>
            <person name="Nguyen C."/>
            <person name="Scott K."/>
            <person name="Holmes A."/>
            <person name="Grewal N."/>
            <person name="Mulvaney E."/>
            <person name="Ryan E."/>
            <person name="Sun H."/>
            <person name="Florea L."/>
            <person name="Miller W."/>
            <person name="Stoneking T."/>
            <person name="Nhan M."/>
            <person name="Waterston R."/>
            <person name="Wilson R.K."/>
        </authorList>
    </citation>
    <scope>NUCLEOTIDE SEQUENCE [LARGE SCALE GENOMIC DNA]</scope>
    <source>
        <strain>LT2 / SGSC1412 / ATCC 700720</strain>
    </source>
</reference>
<protein>
    <recommendedName>
        <fullName evidence="1">Nitric oxide reductase FlRd-NAD(+) reductase</fullName>
        <ecNumber evidence="1">1.18.1.-</ecNumber>
    </recommendedName>
    <alternativeName>
        <fullName evidence="1">Flavorubredoxin reductase</fullName>
        <shortName evidence="1">FlRd-reductase</shortName>
        <shortName evidence="1">FlavoRb reductase</shortName>
    </alternativeName>
</protein>
<sequence length="377" mass="41172">MSRGIIIIGSGFAARQLVKNIRKQDAHVPLTLIAADSMDEYNKPDLSHVISQSQRADDLTRQLAGEFAEQFNLRRFPHTWVADIDADAHVVKSQDKQWQYDKLVLATGATAFVPPIAGRELMLTLNSQQEYRACETQLRDAQRVLIVGGGLIGSELAMDFCRAGKTVTLMDNAASLLASLMPPEVSSRLQHHLTDMGVHLLLKSQLQKLEKTEAGIRATLVSQHSIEVDAVIAATGLRPETALARRAGVAVNRGVCVDSYLQTSHPDIYAIGDCAEINGQVLPFLQPIQLSAMYLAKNLLGGNAPLKLPAMLVKVKTPELPLHLAGETQRRDLSWHITAESDGMIAKGMSGEGQLRAFVVSEDRMKEAFALLKTLSV</sequence>